<proteinExistence type="inferred from homology"/>
<evidence type="ECO:0000255" key="1">
    <source>
        <dbReference type="HAMAP-Rule" id="MF_01691"/>
    </source>
</evidence>
<name>DAPH_STAAE</name>
<feature type="chain" id="PRO_0000376698" description="2,3,4,5-tetrahydropyridine-2,6-dicarboxylate N-acetyltransferase">
    <location>
        <begin position="1"/>
        <end position="239"/>
    </location>
</feature>
<organism>
    <name type="scientific">Staphylococcus aureus (strain Newman)</name>
    <dbReference type="NCBI Taxonomy" id="426430"/>
    <lineage>
        <taxon>Bacteria</taxon>
        <taxon>Bacillati</taxon>
        <taxon>Bacillota</taxon>
        <taxon>Bacilli</taxon>
        <taxon>Bacillales</taxon>
        <taxon>Staphylococcaceae</taxon>
        <taxon>Staphylococcus</taxon>
    </lineage>
</organism>
<accession>A6QGU8</accession>
<protein>
    <recommendedName>
        <fullName evidence="1">2,3,4,5-tetrahydropyridine-2,6-dicarboxylate N-acetyltransferase</fullName>
        <ecNumber evidence="1">2.3.1.89</ecNumber>
    </recommendedName>
    <alternativeName>
        <fullName evidence="1">Tetrahydrodipicolinate N-acetyltransferase</fullName>
        <shortName evidence="1">THP acetyltransferase</shortName>
        <shortName evidence="1">Tetrahydropicolinate acetylase</shortName>
    </alternativeName>
</protein>
<gene>
    <name evidence="1" type="primary">dapH</name>
    <name type="ordered locus">NWMN_1308</name>
</gene>
<comment type="function">
    <text evidence="1">Catalyzes the transfer of an acetyl group from acetyl-CoA to tetrahydrodipicolinate.</text>
</comment>
<comment type="catalytic activity">
    <reaction evidence="1">
        <text>(S)-2,3,4,5-tetrahydrodipicolinate + acetyl-CoA + H2O = L-2-acetamido-6-oxoheptanedioate + CoA</text>
        <dbReference type="Rhea" id="RHEA:13085"/>
        <dbReference type="ChEBI" id="CHEBI:15377"/>
        <dbReference type="ChEBI" id="CHEBI:16845"/>
        <dbReference type="ChEBI" id="CHEBI:57287"/>
        <dbReference type="ChEBI" id="CHEBI:57288"/>
        <dbReference type="ChEBI" id="CHEBI:58117"/>
        <dbReference type="EC" id="2.3.1.89"/>
    </reaction>
</comment>
<comment type="pathway">
    <text evidence="1">Amino-acid biosynthesis; L-lysine biosynthesis via DAP pathway; LL-2,6-diaminopimelate from (S)-tetrahydrodipicolinate (acetylase route): step 1/3.</text>
</comment>
<comment type="similarity">
    <text evidence="1">Belongs to the transferase hexapeptide repeat family. DapH subfamily.</text>
</comment>
<sequence>MVQHLTAEEIIQYISDAKKSTPIKVYLNGNFEGITYPESFKVFGSEQSKVIFCEADDWKPFYEAYGSQFEDIEIEMDRRNSAIPLKDLTNTNARIEPGAFIREQAIIEDGAVVMMGATINIGAVVGEGTMIDMNATLGGRATTGKNVHVGAGAVLAGVIEPPSASPVIIEDDVLIGANAVILEGVRVGKGAIVAAGAIVTQDVPAGAVVAGTPCKVIKAASEVQDTKKEIVAALRKLND</sequence>
<reference key="1">
    <citation type="journal article" date="2008" name="J. Bacteriol.">
        <title>Genome sequence of Staphylococcus aureus strain Newman and comparative analysis of staphylococcal genomes: polymorphism and evolution of two major pathogenicity islands.</title>
        <authorList>
            <person name="Baba T."/>
            <person name="Bae T."/>
            <person name="Schneewind O."/>
            <person name="Takeuchi F."/>
            <person name="Hiramatsu K."/>
        </authorList>
    </citation>
    <scope>NUCLEOTIDE SEQUENCE [LARGE SCALE GENOMIC DNA]</scope>
    <source>
        <strain>Newman</strain>
    </source>
</reference>
<keyword id="KW-0012">Acyltransferase</keyword>
<keyword id="KW-0028">Amino-acid biosynthesis</keyword>
<keyword id="KW-0220">Diaminopimelate biosynthesis</keyword>
<keyword id="KW-0457">Lysine biosynthesis</keyword>
<keyword id="KW-0677">Repeat</keyword>
<keyword id="KW-0808">Transferase</keyword>
<dbReference type="EC" id="2.3.1.89" evidence="1"/>
<dbReference type="EMBL" id="AP009351">
    <property type="protein sequence ID" value="BAF67580.1"/>
    <property type="molecule type" value="Genomic_DNA"/>
</dbReference>
<dbReference type="RefSeq" id="WP_000249840.1">
    <property type="nucleotide sequence ID" value="NC_009641.1"/>
</dbReference>
<dbReference type="SMR" id="A6QGU8"/>
<dbReference type="KEGG" id="sae:NWMN_1308"/>
<dbReference type="HOGENOM" id="CLU_103751_0_0_9"/>
<dbReference type="UniPathway" id="UPA00034">
    <property type="reaction ID" value="UER00022"/>
</dbReference>
<dbReference type="Proteomes" id="UP000006386">
    <property type="component" value="Chromosome"/>
</dbReference>
<dbReference type="GO" id="GO:0047200">
    <property type="term" value="F:tetrahydrodipicolinate N-acetyltransferase activity"/>
    <property type="evidence" value="ECO:0007669"/>
    <property type="project" value="UniProtKB-EC"/>
</dbReference>
<dbReference type="GO" id="GO:0019877">
    <property type="term" value="P:diaminopimelate biosynthetic process"/>
    <property type="evidence" value="ECO:0007669"/>
    <property type="project" value="UniProtKB-UniRule"/>
</dbReference>
<dbReference type="GO" id="GO:0009089">
    <property type="term" value="P:lysine biosynthetic process via diaminopimelate"/>
    <property type="evidence" value="ECO:0007669"/>
    <property type="project" value="UniProtKB-UniRule"/>
</dbReference>
<dbReference type="CDD" id="cd03350">
    <property type="entry name" value="LbH_THP_succinylT"/>
    <property type="match status" value="1"/>
</dbReference>
<dbReference type="Gene3D" id="2.160.10.10">
    <property type="entry name" value="Hexapeptide repeat proteins"/>
    <property type="match status" value="1"/>
</dbReference>
<dbReference type="Gene3D" id="3.30.70.250">
    <property type="entry name" value="Malonyl-CoA ACP transacylase, ACP-binding"/>
    <property type="match status" value="1"/>
</dbReference>
<dbReference type="HAMAP" id="MF_01691">
    <property type="entry name" value="DapH"/>
    <property type="match status" value="1"/>
</dbReference>
<dbReference type="InterPro" id="IPR019873">
    <property type="entry name" value="DapH"/>
</dbReference>
<dbReference type="InterPro" id="IPR013710">
    <property type="entry name" value="DapH_N"/>
</dbReference>
<dbReference type="InterPro" id="IPR001451">
    <property type="entry name" value="Hexapep"/>
</dbReference>
<dbReference type="InterPro" id="IPR018357">
    <property type="entry name" value="Hexapep_transf_CS"/>
</dbReference>
<dbReference type="InterPro" id="IPR050179">
    <property type="entry name" value="Trans_hexapeptide_repeat"/>
</dbReference>
<dbReference type="InterPro" id="IPR011004">
    <property type="entry name" value="Trimer_LpxA-like_sf"/>
</dbReference>
<dbReference type="NCBIfam" id="TIGR03532">
    <property type="entry name" value="DapD_Ac"/>
    <property type="match status" value="1"/>
</dbReference>
<dbReference type="PANTHER" id="PTHR43300:SF10">
    <property type="entry name" value="2,3,4,5-TETRAHYDROPYRIDINE-2,6-DICARBOXYLATE N-ACETYLTRANSFERASE"/>
    <property type="match status" value="1"/>
</dbReference>
<dbReference type="PANTHER" id="PTHR43300">
    <property type="entry name" value="ACETYLTRANSFERASE"/>
    <property type="match status" value="1"/>
</dbReference>
<dbReference type="Pfam" id="PF08503">
    <property type="entry name" value="DapH_N"/>
    <property type="match status" value="1"/>
</dbReference>
<dbReference type="Pfam" id="PF00132">
    <property type="entry name" value="Hexapep"/>
    <property type="match status" value="1"/>
</dbReference>
<dbReference type="Pfam" id="PF14602">
    <property type="entry name" value="Hexapep_2"/>
    <property type="match status" value="1"/>
</dbReference>
<dbReference type="SUPFAM" id="SSF51161">
    <property type="entry name" value="Trimeric LpxA-like enzymes"/>
    <property type="match status" value="1"/>
</dbReference>
<dbReference type="PROSITE" id="PS00101">
    <property type="entry name" value="HEXAPEP_TRANSFERASES"/>
    <property type="match status" value="1"/>
</dbReference>